<sequence>MRPAGRSNNQVRPVTLTRNYTKHAEGSVLVEFGDTKVLCTASIEEGVPRFLKGQGQGWITAEYGMLPRSTHTRNAREAAKGKQGGRTMEIQRLIARALRAAVDLKALGEFTITLDCDVLQADGGTRTASITGACVALADALQKLVENGKLKTNPMKGMVAAVSVGIVNGEAICDLEYVEDSAAETDMNVVMTEDGRIIEVQGTAEGEPFTHEELLTLLALARGGIESIVATQKAALAN</sequence>
<comment type="function">
    <text evidence="1">Phosphorolytic 3'-5' exoribonuclease that plays an important role in tRNA 3'-end maturation. Removes nucleotide residues following the 3'-CCA terminus of tRNAs; can also add nucleotides to the ends of RNA molecules by using nucleoside diphosphates as substrates, but this may not be physiologically important. Probably plays a role in initiation of 16S rRNA degradation (leading to ribosome degradation) during starvation.</text>
</comment>
<comment type="catalytic activity">
    <reaction evidence="1">
        <text>tRNA(n+1) + phosphate = tRNA(n) + a ribonucleoside 5'-diphosphate</text>
        <dbReference type="Rhea" id="RHEA:10628"/>
        <dbReference type="Rhea" id="RHEA-COMP:17343"/>
        <dbReference type="Rhea" id="RHEA-COMP:17344"/>
        <dbReference type="ChEBI" id="CHEBI:43474"/>
        <dbReference type="ChEBI" id="CHEBI:57930"/>
        <dbReference type="ChEBI" id="CHEBI:173114"/>
        <dbReference type="EC" id="2.7.7.56"/>
    </reaction>
</comment>
<comment type="subunit">
    <text evidence="1">Homohexameric ring arranged as a trimer of dimers.</text>
</comment>
<comment type="similarity">
    <text evidence="1">Belongs to the RNase PH family.</text>
</comment>
<organism>
    <name type="scientific">Escherichia coli O9:H4 (strain HS)</name>
    <dbReference type="NCBI Taxonomy" id="331112"/>
    <lineage>
        <taxon>Bacteria</taxon>
        <taxon>Pseudomonadati</taxon>
        <taxon>Pseudomonadota</taxon>
        <taxon>Gammaproteobacteria</taxon>
        <taxon>Enterobacterales</taxon>
        <taxon>Enterobacteriaceae</taxon>
        <taxon>Escherichia</taxon>
    </lineage>
</organism>
<gene>
    <name evidence="1" type="primary">rph</name>
    <name type="ordered locus">EcHS_A3852</name>
</gene>
<protein>
    <recommendedName>
        <fullName evidence="1">Ribonuclease PH</fullName>
        <shortName evidence="1">RNase PH</shortName>
        <ecNumber evidence="1">2.7.7.56</ecNumber>
    </recommendedName>
    <alternativeName>
        <fullName evidence="1">tRNA nucleotidyltransferase</fullName>
    </alternativeName>
</protein>
<reference key="1">
    <citation type="journal article" date="2008" name="J. Bacteriol.">
        <title>The pangenome structure of Escherichia coli: comparative genomic analysis of E. coli commensal and pathogenic isolates.</title>
        <authorList>
            <person name="Rasko D.A."/>
            <person name="Rosovitz M.J."/>
            <person name="Myers G.S.A."/>
            <person name="Mongodin E.F."/>
            <person name="Fricke W.F."/>
            <person name="Gajer P."/>
            <person name="Crabtree J."/>
            <person name="Sebaihia M."/>
            <person name="Thomson N.R."/>
            <person name="Chaudhuri R."/>
            <person name="Henderson I.R."/>
            <person name="Sperandio V."/>
            <person name="Ravel J."/>
        </authorList>
    </citation>
    <scope>NUCLEOTIDE SEQUENCE [LARGE SCALE GENOMIC DNA]</scope>
    <source>
        <strain>HS</strain>
    </source>
</reference>
<proteinExistence type="inferred from homology"/>
<feature type="chain" id="PRO_1000061134" description="Ribonuclease PH">
    <location>
        <begin position="1"/>
        <end position="238"/>
    </location>
</feature>
<feature type="binding site" evidence="1">
    <location>
        <position position="86"/>
    </location>
    <ligand>
        <name>phosphate</name>
        <dbReference type="ChEBI" id="CHEBI:43474"/>
        <note>substrate</note>
    </ligand>
</feature>
<feature type="binding site" evidence="1">
    <location>
        <begin position="124"/>
        <end position="126"/>
    </location>
    <ligand>
        <name>phosphate</name>
        <dbReference type="ChEBI" id="CHEBI:43474"/>
        <note>substrate</note>
    </ligand>
</feature>
<keyword id="KW-0548">Nucleotidyltransferase</keyword>
<keyword id="KW-0694">RNA-binding</keyword>
<keyword id="KW-0698">rRNA processing</keyword>
<keyword id="KW-0808">Transferase</keyword>
<keyword id="KW-0819">tRNA processing</keyword>
<keyword id="KW-0820">tRNA-binding</keyword>
<dbReference type="EC" id="2.7.7.56" evidence="1"/>
<dbReference type="EMBL" id="CP000802">
    <property type="protein sequence ID" value="ABV08059.1"/>
    <property type="molecule type" value="Genomic_DNA"/>
</dbReference>
<dbReference type="RefSeq" id="WP_001247089.1">
    <property type="nucleotide sequence ID" value="NC_009800.1"/>
</dbReference>
<dbReference type="SMR" id="A8A6A5"/>
<dbReference type="GeneID" id="75202212"/>
<dbReference type="KEGG" id="ecx:EcHS_A3852"/>
<dbReference type="HOGENOM" id="CLU_050858_0_0_6"/>
<dbReference type="GO" id="GO:0000175">
    <property type="term" value="F:3'-5'-RNA exonuclease activity"/>
    <property type="evidence" value="ECO:0007669"/>
    <property type="project" value="UniProtKB-UniRule"/>
</dbReference>
<dbReference type="GO" id="GO:0000049">
    <property type="term" value="F:tRNA binding"/>
    <property type="evidence" value="ECO:0007669"/>
    <property type="project" value="UniProtKB-UniRule"/>
</dbReference>
<dbReference type="GO" id="GO:0009022">
    <property type="term" value="F:tRNA nucleotidyltransferase activity"/>
    <property type="evidence" value="ECO:0007669"/>
    <property type="project" value="UniProtKB-UniRule"/>
</dbReference>
<dbReference type="GO" id="GO:0016075">
    <property type="term" value="P:rRNA catabolic process"/>
    <property type="evidence" value="ECO:0007669"/>
    <property type="project" value="UniProtKB-UniRule"/>
</dbReference>
<dbReference type="GO" id="GO:0006364">
    <property type="term" value="P:rRNA processing"/>
    <property type="evidence" value="ECO:0007669"/>
    <property type="project" value="UniProtKB-KW"/>
</dbReference>
<dbReference type="GO" id="GO:0008033">
    <property type="term" value="P:tRNA processing"/>
    <property type="evidence" value="ECO:0007669"/>
    <property type="project" value="UniProtKB-UniRule"/>
</dbReference>
<dbReference type="CDD" id="cd11362">
    <property type="entry name" value="RNase_PH_bact"/>
    <property type="match status" value="1"/>
</dbReference>
<dbReference type="FunFam" id="3.30.230.70:FF:000003">
    <property type="entry name" value="Ribonuclease PH"/>
    <property type="match status" value="1"/>
</dbReference>
<dbReference type="Gene3D" id="3.30.230.70">
    <property type="entry name" value="GHMP Kinase, N-terminal domain"/>
    <property type="match status" value="1"/>
</dbReference>
<dbReference type="HAMAP" id="MF_00564">
    <property type="entry name" value="RNase_PH"/>
    <property type="match status" value="1"/>
</dbReference>
<dbReference type="InterPro" id="IPR001247">
    <property type="entry name" value="ExoRNase_PH_dom1"/>
</dbReference>
<dbReference type="InterPro" id="IPR015847">
    <property type="entry name" value="ExoRNase_PH_dom2"/>
</dbReference>
<dbReference type="InterPro" id="IPR036345">
    <property type="entry name" value="ExoRNase_PH_dom2_sf"/>
</dbReference>
<dbReference type="InterPro" id="IPR027408">
    <property type="entry name" value="PNPase/RNase_PH_dom_sf"/>
</dbReference>
<dbReference type="InterPro" id="IPR020568">
    <property type="entry name" value="Ribosomal_Su5_D2-typ_SF"/>
</dbReference>
<dbReference type="InterPro" id="IPR050080">
    <property type="entry name" value="RNase_PH"/>
</dbReference>
<dbReference type="InterPro" id="IPR002381">
    <property type="entry name" value="RNase_PH_bac-type"/>
</dbReference>
<dbReference type="InterPro" id="IPR018336">
    <property type="entry name" value="RNase_PH_CS"/>
</dbReference>
<dbReference type="NCBIfam" id="TIGR01966">
    <property type="entry name" value="RNasePH"/>
    <property type="match status" value="1"/>
</dbReference>
<dbReference type="PANTHER" id="PTHR11953">
    <property type="entry name" value="EXOSOME COMPLEX COMPONENT"/>
    <property type="match status" value="1"/>
</dbReference>
<dbReference type="PANTHER" id="PTHR11953:SF0">
    <property type="entry name" value="EXOSOME COMPLEX COMPONENT RRP41"/>
    <property type="match status" value="1"/>
</dbReference>
<dbReference type="Pfam" id="PF01138">
    <property type="entry name" value="RNase_PH"/>
    <property type="match status" value="1"/>
</dbReference>
<dbReference type="Pfam" id="PF03725">
    <property type="entry name" value="RNase_PH_C"/>
    <property type="match status" value="1"/>
</dbReference>
<dbReference type="SUPFAM" id="SSF55666">
    <property type="entry name" value="Ribonuclease PH domain 2-like"/>
    <property type="match status" value="1"/>
</dbReference>
<dbReference type="SUPFAM" id="SSF54211">
    <property type="entry name" value="Ribosomal protein S5 domain 2-like"/>
    <property type="match status" value="1"/>
</dbReference>
<dbReference type="PROSITE" id="PS01277">
    <property type="entry name" value="RIBONUCLEASE_PH"/>
    <property type="match status" value="1"/>
</dbReference>
<evidence type="ECO:0000255" key="1">
    <source>
        <dbReference type="HAMAP-Rule" id="MF_00564"/>
    </source>
</evidence>
<accession>A8A6A5</accession>
<name>RNPH_ECOHS</name>